<name>6P21_YEAST</name>
<organism>
    <name type="scientific">Saccharomyces cerevisiae (strain ATCC 204508 / S288c)</name>
    <name type="common">Baker's yeast</name>
    <dbReference type="NCBI Taxonomy" id="559292"/>
    <lineage>
        <taxon>Eukaryota</taxon>
        <taxon>Fungi</taxon>
        <taxon>Dikarya</taxon>
        <taxon>Ascomycota</taxon>
        <taxon>Saccharomycotina</taxon>
        <taxon>Saccharomycetes</taxon>
        <taxon>Saccharomycetales</taxon>
        <taxon>Saccharomycetaceae</taxon>
        <taxon>Saccharomyces</taxon>
    </lineage>
</organism>
<keyword id="KW-0067">ATP-binding</keyword>
<keyword id="KW-0903">Direct protein sequencing</keyword>
<keyword id="KW-0418">Kinase</keyword>
<keyword id="KW-0547">Nucleotide-binding</keyword>
<keyword id="KW-0597">Phosphoprotein</keyword>
<keyword id="KW-1185">Reference proteome</keyword>
<keyword id="KW-0808">Transferase</keyword>
<dbReference type="EC" id="2.7.1.105"/>
<dbReference type="EMBL" id="Z38125">
    <property type="protein sequence ID" value="CAA86273.1"/>
    <property type="molecule type" value="Genomic_DNA"/>
</dbReference>
<dbReference type="EMBL" id="M80801">
    <property type="protein sequence ID" value="AAA34858.1"/>
    <property type="molecule type" value="Genomic_DNA"/>
</dbReference>
<dbReference type="EMBL" id="AY692819">
    <property type="protein sequence ID" value="AAT92838.1"/>
    <property type="molecule type" value="Genomic_DNA"/>
</dbReference>
<dbReference type="EMBL" id="BK006942">
    <property type="protein sequence ID" value="DAA08446.1"/>
    <property type="molecule type" value="Genomic_DNA"/>
</dbReference>
<dbReference type="PIR" id="S48465">
    <property type="entry name" value="S48465"/>
</dbReference>
<dbReference type="RefSeq" id="NP_012159.1">
    <property type="nucleotide sequence ID" value="NM_001179455.1"/>
</dbReference>
<dbReference type="SMR" id="P40433"/>
<dbReference type="BioGRID" id="34884">
    <property type="interactions" value="197"/>
</dbReference>
<dbReference type="FunCoup" id="P40433">
    <property type="interactions" value="122"/>
</dbReference>
<dbReference type="IntAct" id="P40433">
    <property type="interactions" value="271"/>
</dbReference>
<dbReference type="MINT" id="P40433"/>
<dbReference type="STRING" id="4932.YIL107C"/>
<dbReference type="GlyGen" id="P40433">
    <property type="glycosylation" value="2 sites, 1 O-linked glycan (2 sites)"/>
</dbReference>
<dbReference type="iPTMnet" id="P40433"/>
<dbReference type="PaxDb" id="4932-YIL107C"/>
<dbReference type="PeptideAtlas" id="P40433"/>
<dbReference type="EnsemblFungi" id="YIL107C_mRNA">
    <property type="protein sequence ID" value="YIL107C"/>
    <property type="gene ID" value="YIL107C"/>
</dbReference>
<dbReference type="GeneID" id="854699"/>
<dbReference type="KEGG" id="sce:YIL107C"/>
<dbReference type="AGR" id="SGD:S000001369"/>
<dbReference type="SGD" id="S000001369">
    <property type="gene designation" value="PFK26"/>
</dbReference>
<dbReference type="VEuPathDB" id="FungiDB:YIL107C"/>
<dbReference type="eggNOG" id="KOG0234">
    <property type="taxonomic scope" value="Eukaryota"/>
</dbReference>
<dbReference type="GeneTree" id="ENSGT00950000182835"/>
<dbReference type="HOGENOM" id="CLU_006383_3_2_1"/>
<dbReference type="InParanoid" id="P40433"/>
<dbReference type="OMA" id="KPYGITW"/>
<dbReference type="OrthoDB" id="267323at2759"/>
<dbReference type="BioCyc" id="YEAST:YIL107C-MONOMER"/>
<dbReference type="BioGRID-ORCS" id="854699">
    <property type="hits" value="0 hits in 10 CRISPR screens"/>
</dbReference>
<dbReference type="PRO" id="PR:P40433"/>
<dbReference type="Proteomes" id="UP000002311">
    <property type="component" value="Chromosome IX"/>
</dbReference>
<dbReference type="RNAct" id="P40433">
    <property type="molecule type" value="protein"/>
</dbReference>
<dbReference type="GO" id="GO:0005737">
    <property type="term" value="C:cytoplasm"/>
    <property type="evidence" value="ECO:0000305"/>
    <property type="project" value="SGD"/>
</dbReference>
<dbReference type="GO" id="GO:0005829">
    <property type="term" value="C:cytosol"/>
    <property type="evidence" value="ECO:0000318"/>
    <property type="project" value="GO_Central"/>
</dbReference>
<dbReference type="GO" id="GO:0003873">
    <property type="term" value="F:6-phosphofructo-2-kinase activity"/>
    <property type="evidence" value="ECO:0000314"/>
    <property type="project" value="SGD"/>
</dbReference>
<dbReference type="GO" id="GO:0005524">
    <property type="term" value="F:ATP binding"/>
    <property type="evidence" value="ECO:0007669"/>
    <property type="project" value="UniProtKB-KW"/>
</dbReference>
<dbReference type="GO" id="GO:0006003">
    <property type="term" value="P:fructose 2,6-bisphosphate metabolic process"/>
    <property type="evidence" value="ECO:0000315"/>
    <property type="project" value="SGD"/>
</dbReference>
<dbReference type="GO" id="GO:0006000">
    <property type="term" value="P:fructose metabolic process"/>
    <property type="evidence" value="ECO:0007669"/>
    <property type="project" value="InterPro"/>
</dbReference>
<dbReference type="CDD" id="cd07067">
    <property type="entry name" value="HP_PGM_like"/>
    <property type="match status" value="1"/>
</dbReference>
<dbReference type="FunFam" id="3.40.50.1240:FF:000025">
    <property type="entry name" value="6-phosphofructo-2-kinase 1"/>
    <property type="match status" value="1"/>
</dbReference>
<dbReference type="FunFam" id="3.40.50.300:FF:001101">
    <property type="entry name" value="6-phosphofructo-2-kinase 1"/>
    <property type="match status" value="1"/>
</dbReference>
<dbReference type="Gene3D" id="3.40.50.300">
    <property type="entry name" value="P-loop containing nucleotide triphosphate hydrolases"/>
    <property type="match status" value="1"/>
</dbReference>
<dbReference type="Gene3D" id="3.40.50.1240">
    <property type="entry name" value="Phosphoglycerate mutase-like"/>
    <property type="match status" value="1"/>
</dbReference>
<dbReference type="InterPro" id="IPR003094">
    <property type="entry name" value="6Pfruct_kin"/>
</dbReference>
<dbReference type="InterPro" id="IPR013079">
    <property type="entry name" value="6Phosfructo_kin"/>
</dbReference>
<dbReference type="InterPro" id="IPR013078">
    <property type="entry name" value="His_Pase_superF_clade-1"/>
</dbReference>
<dbReference type="InterPro" id="IPR029033">
    <property type="entry name" value="His_PPase_superfam"/>
</dbReference>
<dbReference type="InterPro" id="IPR027417">
    <property type="entry name" value="P-loop_NTPase"/>
</dbReference>
<dbReference type="PANTHER" id="PTHR10606:SF32">
    <property type="entry name" value="6-PHOSPHOFRUCTO-2-KINASE 1"/>
    <property type="match status" value="1"/>
</dbReference>
<dbReference type="PANTHER" id="PTHR10606">
    <property type="entry name" value="6-PHOSPHOFRUCTO-2-KINASE/FRUCTOSE-2,6-BISPHOSPHATASE"/>
    <property type="match status" value="1"/>
</dbReference>
<dbReference type="Pfam" id="PF01591">
    <property type="entry name" value="6PF2K"/>
    <property type="match status" value="1"/>
</dbReference>
<dbReference type="Pfam" id="PF00300">
    <property type="entry name" value="His_Phos_1"/>
    <property type="match status" value="1"/>
</dbReference>
<dbReference type="PRINTS" id="PR00991">
    <property type="entry name" value="6PFRUCTKNASE"/>
</dbReference>
<dbReference type="SMART" id="SM00855">
    <property type="entry name" value="PGAM"/>
    <property type="match status" value="1"/>
</dbReference>
<dbReference type="SUPFAM" id="SSF52540">
    <property type="entry name" value="P-loop containing nucleoside triphosphate hydrolases"/>
    <property type="match status" value="1"/>
</dbReference>
<dbReference type="SUPFAM" id="SSF53254">
    <property type="entry name" value="Phosphoglycerate mutase-like"/>
    <property type="match status" value="1"/>
</dbReference>
<proteinExistence type="evidence at protein level"/>
<comment type="function">
    <text>Synthesis of fructose 2,6-bisphosphate.</text>
</comment>
<comment type="catalytic activity">
    <reaction>
        <text>beta-D-fructose 6-phosphate + ATP = beta-D-fructose 2,6-bisphosphate + ADP + H(+)</text>
        <dbReference type="Rhea" id="RHEA:15653"/>
        <dbReference type="ChEBI" id="CHEBI:15378"/>
        <dbReference type="ChEBI" id="CHEBI:30616"/>
        <dbReference type="ChEBI" id="CHEBI:57634"/>
        <dbReference type="ChEBI" id="CHEBI:58579"/>
        <dbReference type="ChEBI" id="CHEBI:456216"/>
        <dbReference type="EC" id="2.7.1.105"/>
    </reaction>
</comment>
<comment type="activity regulation">
    <text>Phosphorylation results in the activation of the kinase activity.</text>
</comment>
<comment type="interaction">
    <interactant intactId="EBI-1956">
        <id>P40433</id>
    </interactant>
    <interactant intactId="EBI-8627">
        <id>P11484</id>
        <label>SSB1</label>
    </interactant>
    <organismsDiffer>false</organismsDiffer>
    <experiments>2</experiments>
</comment>
<comment type="miscellaneous">
    <text evidence="4">Present with 1710 molecules/cell in log phase SD medium.</text>
</comment>
<accession>P40433</accession>
<accession>D6VVI0</accession>
<evidence type="ECO:0000250" key="1"/>
<evidence type="ECO:0000255" key="2"/>
<evidence type="ECO:0000256" key="3">
    <source>
        <dbReference type="SAM" id="MobiDB-lite"/>
    </source>
</evidence>
<evidence type="ECO:0000269" key="4">
    <source>
    </source>
</evidence>
<evidence type="ECO:0000305" key="5"/>
<evidence type="ECO:0007744" key="6">
    <source>
    </source>
</evidence>
<evidence type="ECO:0007744" key="7">
    <source>
    </source>
</evidence>
<evidence type="ECO:0007744" key="8">
    <source>
    </source>
</evidence>
<reference key="1">
    <citation type="journal article" date="1991" name="Biochemistry">
        <title>Yeast 6-phosphofructo-2-kinase: sequence and mutant.</title>
        <authorList>
            <person name="Kretschmer M."/>
            <person name="Fraenkel D.G."/>
        </authorList>
    </citation>
    <scope>NUCLEOTIDE SEQUENCE [GENOMIC DNA]</scope>
</reference>
<reference key="2">
    <citation type="journal article" date="1997" name="Nature">
        <title>The nucleotide sequence of Saccharomyces cerevisiae chromosome IX.</title>
        <authorList>
            <person name="Churcher C.M."/>
            <person name="Bowman S."/>
            <person name="Badcock K."/>
            <person name="Bankier A.T."/>
            <person name="Brown D."/>
            <person name="Chillingworth T."/>
            <person name="Connor R."/>
            <person name="Devlin K."/>
            <person name="Gentles S."/>
            <person name="Hamlin N."/>
            <person name="Harris D.E."/>
            <person name="Horsnell T."/>
            <person name="Hunt S."/>
            <person name="Jagels K."/>
            <person name="Jones M."/>
            <person name="Lye G."/>
            <person name="Moule S."/>
            <person name="Odell C."/>
            <person name="Pearson D."/>
            <person name="Rajandream M.A."/>
            <person name="Rice P."/>
            <person name="Rowley N."/>
            <person name="Skelton J."/>
            <person name="Smith V."/>
            <person name="Walsh S.V."/>
            <person name="Whitehead S."/>
            <person name="Barrell B.G."/>
        </authorList>
    </citation>
    <scope>NUCLEOTIDE SEQUENCE [LARGE SCALE GENOMIC DNA]</scope>
    <source>
        <strain>ATCC 204508 / S288c</strain>
    </source>
</reference>
<reference key="3">
    <citation type="journal article" date="2014" name="G3 (Bethesda)">
        <title>The reference genome sequence of Saccharomyces cerevisiae: Then and now.</title>
        <authorList>
            <person name="Engel S.R."/>
            <person name="Dietrich F.S."/>
            <person name="Fisk D.G."/>
            <person name="Binkley G."/>
            <person name="Balakrishnan R."/>
            <person name="Costanzo M.C."/>
            <person name="Dwight S.S."/>
            <person name="Hitz B.C."/>
            <person name="Karra K."/>
            <person name="Nash R.S."/>
            <person name="Weng S."/>
            <person name="Wong E.D."/>
            <person name="Lloyd P."/>
            <person name="Skrzypek M.S."/>
            <person name="Miyasato S.R."/>
            <person name="Simison M."/>
            <person name="Cherry J.M."/>
        </authorList>
    </citation>
    <scope>GENOME REANNOTATION</scope>
    <source>
        <strain>ATCC 204508 / S288c</strain>
    </source>
</reference>
<reference key="4">
    <citation type="journal article" date="2007" name="Genome Res.">
        <title>Approaching a complete repository of sequence-verified protein-encoding clones for Saccharomyces cerevisiae.</title>
        <authorList>
            <person name="Hu Y."/>
            <person name="Rolfs A."/>
            <person name="Bhullar B."/>
            <person name="Murthy T.V.S."/>
            <person name="Zhu C."/>
            <person name="Berger M.F."/>
            <person name="Camargo A.A."/>
            <person name="Kelley F."/>
            <person name="McCarron S."/>
            <person name="Jepson D."/>
            <person name="Richardson A."/>
            <person name="Raphael J."/>
            <person name="Moreira D."/>
            <person name="Taycher E."/>
            <person name="Zuo D."/>
            <person name="Mohr S."/>
            <person name="Kane M.F."/>
            <person name="Williamson J."/>
            <person name="Simpson A.J.G."/>
            <person name="Bulyk M.L."/>
            <person name="Harlow E."/>
            <person name="Marsischky G."/>
            <person name="Kolodner R.D."/>
            <person name="LaBaer J."/>
        </authorList>
    </citation>
    <scope>NUCLEOTIDE SEQUENCE [GENOMIC DNA]</scope>
    <source>
        <strain>ATCC 204508 / S288c</strain>
    </source>
</reference>
<reference key="5">
    <citation type="journal article" date="1991" name="Eur. J. Biochem.">
        <title>Identification and cloning of yeast phosphofructokinase 2.</title>
        <authorList>
            <person name="Kretschmer M."/>
            <person name="Tempst P."/>
            <person name="Fraenkel D.G."/>
        </authorList>
    </citation>
    <scope>PARTIAL PROTEIN SEQUENCE</scope>
</reference>
<reference key="6">
    <citation type="journal article" date="2003" name="Nature">
        <title>Global analysis of protein expression in yeast.</title>
        <authorList>
            <person name="Ghaemmaghami S."/>
            <person name="Huh W.-K."/>
            <person name="Bower K."/>
            <person name="Howson R.W."/>
            <person name="Belle A."/>
            <person name="Dephoure N."/>
            <person name="O'Shea E.K."/>
            <person name="Weissman J.S."/>
        </authorList>
    </citation>
    <scope>LEVEL OF PROTEIN EXPRESSION [LARGE SCALE ANALYSIS]</scope>
</reference>
<reference key="7">
    <citation type="journal article" date="2005" name="Mol. Cell. Proteomics">
        <title>Quantitative phosphoproteomics applied to the yeast pheromone signaling pathway.</title>
        <authorList>
            <person name="Gruhler A."/>
            <person name="Olsen J.V."/>
            <person name="Mohammed S."/>
            <person name="Mortensen P."/>
            <person name="Faergeman N.J."/>
            <person name="Mann M."/>
            <person name="Jensen O.N."/>
        </authorList>
    </citation>
    <scope>PHOSPHORYLATION [LARGE SCALE ANALYSIS] AT SER-659</scope>
    <scope>IDENTIFICATION BY MASS SPECTROMETRY [LARGE SCALE ANALYSIS]</scope>
    <source>
        <strain>YAL6B</strain>
    </source>
</reference>
<reference key="8">
    <citation type="journal article" date="2007" name="J. Proteome Res.">
        <title>Large-scale phosphorylation analysis of alpha-factor-arrested Saccharomyces cerevisiae.</title>
        <authorList>
            <person name="Li X."/>
            <person name="Gerber S.A."/>
            <person name="Rudner A.D."/>
            <person name="Beausoleil S.A."/>
            <person name="Haas W."/>
            <person name="Villen J."/>
            <person name="Elias J.E."/>
            <person name="Gygi S.P."/>
        </authorList>
    </citation>
    <scope>PHOSPHORYLATION [LARGE SCALE ANALYSIS] AT THR-157</scope>
    <scope>IDENTIFICATION BY MASS SPECTROMETRY [LARGE SCALE ANALYSIS]</scope>
    <source>
        <strain>ADR376</strain>
    </source>
</reference>
<reference key="9">
    <citation type="journal article" date="2007" name="Proc. Natl. Acad. Sci. U.S.A.">
        <title>Analysis of phosphorylation sites on proteins from Saccharomyces cerevisiae by electron transfer dissociation (ETD) mass spectrometry.</title>
        <authorList>
            <person name="Chi A."/>
            <person name="Huttenhower C."/>
            <person name="Geer L.Y."/>
            <person name="Coon J.J."/>
            <person name="Syka J.E.P."/>
            <person name="Bai D.L."/>
            <person name="Shabanowitz J."/>
            <person name="Burke D.J."/>
            <person name="Troyanskaya O.G."/>
            <person name="Hunt D.F."/>
        </authorList>
    </citation>
    <scope>IDENTIFICATION BY MASS SPECTROMETRY [LARGE SCALE ANALYSIS]</scope>
</reference>
<reference key="10">
    <citation type="journal article" date="2008" name="Mol. Cell. Proteomics">
        <title>A multidimensional chromatography technology for in-depth phosphoproteome analysis.</title>
        <authorList>
            <person name="Albuquerque C.P."/>
            <person name="Smolka M.B."/>
            <person name="Payne S.H."/>
            <person name="Bafna V."/>
            <person name="Eng J."/>
            <person name="Zhou H."/>
        </authorList>
    </citation>
    <scope>IDENTIFICATION BY MASS SPECTROMETRY [LARGE SCALE ANALYSIS]</scope>
</reference>
<reference key="11">
    <citation type="journal article" date="2009" name="Science">
        <title>Global analysis of Cdk1 substrate phosphorylation sites provides insights into evolution.</title>
        <authorList>
            <person name="Holt L.J."/>
            <person name="Tuch B.B."/>
            <person name="Villen J."/>
            <person name="Johnson A.D."/>
            <person name="Gygi S.P."/>
            <person name="Morgan D.O."/>
        </authorList>
    </citation>
    <scope>PHOSPHORYLATION [LARGE SCALE ANALYSIS] AT SER-92; SER-644; SER-652 AND SER-667</scope>
    <scope>IDENTIFICATION BY MASS SPECTROMETRY [LARGE SCALE ANALYSIS]</scope>
</reference>
<feature type="chain" id="PRO_0000179976" description="6-phosphofructo-2-kinase 1">
    <location>
        <begin position="1"/>
        <end position="827"/>
    </location>
</feature>
<feature type="region of interest" description="Disordered" evidence="3">
    <location>
        <begin position="1"/>
        <end position="97"/>
    </location>
</feature>
<feature type="region of interest" description="Disordered" evidence="3">
    <location>
        <begin position="149"/>
        <end position="175"/>
    </location>
</feature>
<feature type="region of interest" description="Disordered" evidence="3">
    <location>
        <begin position="649"/>
        <end position="704"/>
    </location>
</feature>
<feature type="region of interest" description="Disordered" evidence="3">
    <location>
        <begin position="799"/>
        <end position="827"/>
    </location>
</feature>
<feature type="compositionally biased region" description="Low complexity" evidence="3">
    <location>
        <begin position="31"/>
        <end position="41"/>
    </location>
</feature>
<feature type="compositionally biased region" description="Basic and acidic residues" evidence="3">
    <location>
        <begin position="42"/>
        <end position="59"/>
    </location>
</feature>
<feature type="compositionally biased region" description="Polar residues" evidence="3">
    <location>
        <begin position="72"/>
        <end position="97"/>
    </location>
</feature>
<feature type="compositionally biased region" description="Low complexity" evidence="3">
    <location>
        <begin position="671"/>
        <end position="682"/>
    </location>
</feature>
<feature type="compositionally biased region" description="Polar residues" evidence="3">
    <location>
        <begin position="683"/>
        <end position="704"/>
    </location>
</feature>
<feature type="active site" evidence="2">
    <location>
        <position position="277"/>
    </location>
</feature>
<feature type="active site" evidence="2">
    <location>
        <position position="309"/>
    </location>
</feature>
<feature type="active site" description="Phosphoserine intermediate" evidence="1">
    <location>
        <position position="404"/>
    </location>
</feature>
<feature type="active site" evidence="2">
    <location>
        <position position="497"/>
    </location>
</feature>
<feature type="active site" description="Proton donor" evidence="1">
    <location>
        <position position="565"/>
    </location>
</feature>
<feature type="binding site" evidence="2">
    <location>
        <begin position="190"/>
        <end position="197"/>
    </location>
    <ligand>
        <name>ATP</name>
        <dbReference type="ChEBI" id="CHEBI:30616"/>
    </ligand>
</feature>
<feature type="binding site" evidence="1">
    <location>
        <position position="343"/>
    </location>
    <ligand>
        <name>beta-D-fructose 6-phosphate</name>
        <dbReference type="ChEBI" id="CHEBI:57634"/>
    </ligand>
</feature>
<feature type="modified residue" description="Phosphoserine" evidence="8">
    <location>
        <position position="92"/>
    </location>
</feature>
<feature type="modified residue" description="Phosphothreonine" evidence="7">
    <location>
        <position position="157"/>
    </location>
</feature>
<feature type="modified residue" description="Phosphoserine" evidence="8">
    <location>
        <position position="644"/>
    </location>
</feature>
<feature type="modified residue" description="Phosphoserine" evidence="8">
    <location>
        <position position="652"/>
    </location>
</feature>
<feature type="modified residue" description="Phosphoserine" evidence="6">
    <location>
        <position position="659"/>
    </location>
</feature>
<feature type="modified residue" description="Phosphoserine" evidence="8">
    <location>
        <position position="667"/>
    </location>
</feature>
<feature type="sequence conflict" description="In Ref. 1; AAA34858." evidence="5" ref="1">
    <original>A</original>
    <variation>R</variation>
    <location>
        <position position="382"/>
    </location>
</feature>
<feature type="sequence conflict" description="In Ref. 5; AA sequence." evidence="5" ref="5">
    <original>G</original>
    <variation>E</variation>
    <location>
        <position position="477"/>
    </location>
</feature>
<gene>
    <name type="primary">PFK26</name>
    <name type="ordered locus">YIL107C</name>
</gene>
<sequence>MFKPVDFSETSPVPPDIDLAPTQSPHHVAPSQDSSYDLLSRSSDDKIDAEKGPHDELSKHLPLFQKRPLSDTPISSNWNSPGITEENTPSDSPENSATNLKSLHRLHINDETQLKNAKIPTNDTTDYMPPSDGANEVTRIDLKDIKSPTRHHKRRPTTIDVPGLTKSKTSPDGLISKEDSGSKLVIVMVGLPATGKSFITNKLSRFLNYSLYYCKVFNVGNTRRKFAKEHGLKDQDSKFFEPKNADSTRLRDKWAMDTLDELLDYLLEGSGSVGIFDATNTSRERRKNVLARIRKRSPHLKVLFLESVCSDHALVQKNIRLKLFGPDYKGKDPESSLKDFKSRLANYLKAYEPIEDDENLQYIKMIDVGKKVIAYNIQGFLASQTVYYLLNFNLADRQIWITRSGESEDNVSGRIGGNSHLTPRGLRFAKSLPKFIARQREIFYQNLMQQKKNNENTDGNIYNDFFVWTSMRARTIGTAQYFNEDDYPIKQMKMLDELSAGDYDGMTYPEIKNNFPEEFEKRQKDKLRYRYPGIGGESYMDVINRLRPVITELERIEDNVLIITHRVVARALLGYFMNLSMGIIANLDVPLHCVYCLEPKPYGITWSLWEYDEASDSFSKVPQTDLNTTRVKEVGLVYNERRYSVIPTAPPSARSSFASDFLSRKRSNPTSASSSQSELSEQPKNSVSAQTGSNNTTLIGSNFNIKNENGDSRIPLSAPLMATNTSNNILDGGGTSISIHRPRVVPNQNNVNPLLANNNKAASNVPNVKKSAATPRQIFEIDKVDEKLSMLKNKSFLLHGKDYPNNADNNDNEDIRAKTMNRSQSHV</sequence>
<protein>
    <recommendedName>
        <fullName>6-phosphofructo-2-kinase 1</fullName>
        <shortName>6PF-2-K 1</shortName>
        <ecNumber>2.7.1.105</ecNumber>
    </recommendedName>
    <alternativeName>
        <fullName>Phosphofructokinase 2 I</fullName>
    </alternativeName>
</protein>